<dbReference type="EMBL" id="CP000749">
    <property type="protein sequence ID" value="ABR71536.1"/>
    <property type="molecule type" value="Genomic_DNA"/>
</dbReference>
<dbReference type="SMR" id="A6VYK7"/>
<dbReference type="STRING" id="400668.Mmwyl1_2623"/>
<dbReference type="KEGG" id="mmw:Mmwyl1_2623"/>
<dbReference type="eggNOG" id="COG2001">
    <property type="taxonomic scope" value="Bacteria"/>
</dbReference>
<dbReference type="HOGENOM" id="CLU_107907_2_0_6"/>
<dbReference type="OrthoDB" id="9807753at2"/>
<dbReference type="GO" id="GO:0005737">
    <property type="term" value="C:cytoplasm"/>
    <property type="evidence" value="ECO:0007669"/>
    <property type="project" value="UniProtKB-UniRule"/>
</dbReference>
<dbReference type="GO" id="GO:0009295">
    <property type="term" value="C:nucleoid"/>
    <property type="evidence" value="ECO:0007669"/>
    <property type="project" value="UniProtKB-SubCell"/>
</dbReference>
<dbReference type="GO" id="GO:0003700">
    <property type="term" value="F:DNA-binding transcription factor activity"/>
    <property type="evidence" value="ECO:0007669"/>
    <property type="project" value="UniProtKB-UniRule"/>
</dbReference>
<dbReference type="GO" id="GO:0000976">
    <property type="term" value="F:transcription cis-regulatory region binding"/>
    <property type="evidence" value="ECO:0007669"/>
    <property type="project" value="TreeGrafter"/>
</dbReference>
<dbReference type="GO" id="GO:2000143">
    <property type="term" value="P:negative regulation of DNA-templated transcription initiation"/>
    <property type="evidence" value="ECO:0007669"/>
    <property type="project" value="TreeGrafter"/>
</dbReference>
<dbReference type="CDD" id="cd16321">
    <property type="entry name" value="MraZ_C"/>
    <property type="match status" value="1"/>
</dbReference>
<dbReference type="CDD" id="cd16320">
    <property type="entry name" value="MraZ_N"/>
    <property type="match status" value="1"/>
</dbReference>
<dbReference type="Gene3D" id="3.40.1550.20">
    <property type="entry name" value="Transcriptional regulator MraZ domain"/>
    <property type="match status" value="1"/>
</dbReference>
<dbReference type="HAMAP" id="MF_01008">
    <property type="entry name" value="MraZ"/>
    <property type="match status" value="1"/>
</dbReference>
<dbReference type="InterPro" id="IPR003444">
    <property type="entry name" value="MraZ"/>
</dbReference>
<dbReference type="InterPro" id="IPR035644">
    <property type="entry name" value="MraZ_C"/>
</dbReference>
<dbReference type="InterPro" id="IPR020603">
    <property type="entry name" value="MraZ_dom"/>
</dbReference>
<dbReference type="InterPro" id="IPR035642">
    <property type="entry name" value="MraZ_N"/>
</dbReference>
<dbReference type="InterPro" id="IPR038619">
    <property type="entry name" value="MraZ_sf"/>
</dbReference>
<dbReference type="InterPro" id="IPR007159">
    <property type="entry name" value="SpoVT-AbrB_dom"/>
</dbReference>
<dbReference type="InterPro" id="IPR037914">
    <property type="entry name" value="SpoVT-AbrB_sf"/>
</dbReference>
<dbReference type="NCBIfam" id="TIGR00242">
    <property type="entry name" value="division/cell wall cluster transcriptional repressor MraZ"/>
    <property type="match status" value="1"/>
</dbReference>
<dbReference type="PANTHER" id="PTHR34701">
    <property type="entry name" value="TRANSCRIPTIONAL REGULATOR MRAZ"/>
    <property type="match status" value="1"/>
</dbReference>
<dbReference type="PANTHER" id="PTHR34701:SF1">
    <property type="entry name" value="TRANSCRIPTIONAL REGULATOR MRAZ"/>
    <property type="match status" value="1"/>
</dbReference>
<dbReference type="Pfam" id="PF02381">
    <property type="entry name" value="MraZ"/>
    <property type="match status" value="2"/>
</dbReference>
<dbReference type="SUPFAM" id="SSF89447">
    <property type="entry name" value="AbrB/MazE/MraZ-like"/>
    <property type="match status" value="1"/>
</dbReference>
<dbReference type="PROSITE" id="PS51740">
    <property type="entry name" value="SPOVT_ABRB"/>
    <property type="match status" value="2"/>
</dbReference>
<protein>
    <recommendedName>
        <fullName>Transcriptional regulator MraZ</fullName>
    </recommendedName>
</protein>
<proteinExistence type="inferred from homology"/>
<accession>A6VYK7</accession>
<feature type="chain" id="PRO_1000084009" description="Transcriptional regulator MraZ">
    <location>
        <begin position="1"/>
        <end position="151"/>
    </location>
</feature>
<feature type="domain" description="SpoVT-AbrB 1" evidence="2">
    <location>
        <begin position="5"/>
        <end position="52"/>
    </location>
</feature>
<feature type="domain" description="SpoVT-AbrB 2" evidence="2">
    <location>
        <begin position="81"/>
        <end position="124"/>
    </location>
</feature>
<keyword id="KW-0963">Cytoplasm</keyword>
<keyword id="KW-0238">DNA-binding</keyword>
<keyword id="KW-0677">Repeat</keyword>
<keyword id="KW-0804">Transcription</keyword>
<keyword id="KW-0805">Transcription regulation</keyword>
<organism>
    <name type="scientific">Marinomonas sp. (strain MWYL1)</name>
    <dbReference type="NCBI Taxonomy" id="400668"/>
    <lineage>
        <taxon>Bacteria</taxon>
        <taxon>Pseudomonadati</taxon>
        <taxon>Pseudomonadota</taxon>
        <taxon>Gammaproteobacteria</taxon>
        <taxon>Oceanospirillales</taxon>
        <taxon>Oceanospirillaceae</taxon>
        <taxon>Marinomonas</taxon>
    </lineage>
</organism>
<reference key="1">
    <citation type="submission" date="2007-06" db="EMBL/GenBank/DDBJ databases">
        <title>Complete sequence of Marinomonas sp. MWYL1.</title>
        <authorList>
            <consortium name="US DOE Joint Genome Institute"/>
            <person name="Copeland A."/>
            <person name="Lucas S."/>
            <person name="Lapidus A."/>
            <person name="Barry K."/>
            <person name="Glavina del Rio T."/>
            <person name="Dalin E."/>
            <person name="Tice H."/>
            <person name="Pitluck S."/>
            <person name="Kiss H."/>
            <person name="Brettin T."/>
            <person name="Bruce D."/>
            <person name="Detter J.C."/>
            <person name="Han C."/>
            <person name="Schmutz J."/>
            <person name="Larimer F."/>
            <person name="Land M."/>
            <person name="Hauser L."/>
            <person name="Kyrpides N."/>
            <person name="Kim E."/>
            <person name="Johnston A.W.B."/>
            <person name="Todd J.D."/>
            <person name="Rogers R."/>
            <person name="Wexler M."/>
            <person name="Bond P.L."/>
            <person name="Li Y."/>
            <person name="Richardson P."/>
        </authorList>
    </citation>
    <scope>NUCLEOTIDE SEQUENCE [LARGE SCALE GENOMIC DNA]</scope>
    <source>
        <strain>MWYL1</strain>
    </source>
</reference>
<evidence type="ECO:0000255" key="1">
    <source>
        <dbReference type="HAMAP-Rule" id="MF_01008"/>
    </source>
</evidence>
<evidence type="ECO:0000255" key="2">
    <source>
        <dbReference type="PROSITE-ProRule" id="PRU01076"/>
    </source>
</evidence>
<comment type="subunit">
    <text evidence="1">Forms oligomers.</text>
</comment>
<comment type="subcellular location">
    <subcellularLocation>
        <location evidence="1">Cytoplasm</location>
        <location evidence="1">Nucleoid</location>
    </subcellularLocation>
</comment>
<comment type="similarity">
    <text evidence="1">Belongs to the MraZ family.</text>
</comment>
<sequence length="151" mass="17414">MFRGIHQVSVDAKGRMSLPARLRDDLAQYDDDGVVVTIDPVSRCLLLYPLSEWELIQQKLDKLPTFQPQARRLQRLLVGHATDLEVDKAGRILLPAPLREFARLDKKLTILGQGKKLEIWSQEEWEAQREDYLSQDALEDLQTETMMDISL</sequence>
<name>MRAZ_MARMS</name>
<gene>
    <name evidence="1" type="primary">mraZ</name>
    <name type="ordered locus">Mmwyl1_2623</name>
</gene>